<accession>Q31ZP7</accession>
<dbReference type="EC" id="3.1.1.29" evidence="1"/>
<dbReference type="EMBL" id="CP000036">
    <property type="protein sequence ID" value="ABB66461.1"/>
    <property type="molecule type" value="Genomic_DNA"/>
</dbReference>
<dbReference type="RefSeq" id="WP_000152930.1">
    <property type="nucleotide sequence ID" value="NC_007613.1"/>
</dbReference>
<dbReference type="SMR" id="Q31ZP7"/>
<dbReference type="KEGG" id="sbo:SBO_1863"/>
<dbReference type="HOGENOM" id="CLU_062456_3_1_6"/>
<dbReference type="Proteomes" id="UP000007067">
    <property type="component" value="Chromosome"/>
</dbReference>
<dbReference type="GO" id="GO:0005737">
    <property type="term" value="C:cytoplasm"/>
    <property type="evidence" value="ECO:0007669"/>
    <property type="project" value="UniProtKB-SubCell"/>
</dbReference>
<dbReference type="GO" id="GO:0004045">
    <property type="term" value="F:peptidyl-tRNA hydrolase activity"/>
    <property type="evidence" value="ECO:0007669"/>
    <property type="project" value="UniProtKB-UniRule"/>
</dbReference>
<dbReference type="GO" id="GO:0000049">
    <property type="term" value="F:tRNA binding"/>
    <property type="evidence" value="ECO:0007669"/>
    <property type="project" value="UniProtKB-UniRule"/>
</dbReference>
<dbReference type="GO" id="GO:0006515">
    <property type="term" value="P:protein quality control for misfolded or incompletely synthesized proteins"/>
    <property type="evidence" value="ECO:0007669"/>
    <property type="project" value="UniProtKB-UniRule"/>
</dbReference>
<dbReference type="GO" id="GO:0072344">
    <property type="term" value="P:rescue of stalled ribosome"/>
    <property type="evidence" value="ECO:0007669"/>
    <property type="project" value="UniProtKB-UniRule"/>
</dbReference>
<dbReference type="CDD" id="cd00462">
    <property type="entry name" value="PTH"/>
    <property type="match status" value="1"/>
</dbReference>
<dbReference type="FunFam" id="3.40.50.1470:FF:000001">
    <property type="entry name" value="Peptidyl-tRNA hydrolase"/>
    <property type="match status" value="1"/>
</dbReference>
<dbReference type="Gene3D" id="3.40.50.1470">
    <property type="entry name" value="Peptidyl-tRNA hydrolase"/>
    <property type="match status" value="1"/>
</dbReference>
<dbReference type="HAMAP" id="MF_00083">
    <property type="entry name" value="Pept_tRNA_hydro_bact"/>
    <property type="match status" value="1"/>
</dbReference>
<dbReference type="InterPro" id="IPR001328">
    <property type="entry name" value="Pept_tRNA_hydro"/>
</dbReference>
<dbReference type="InterPro" id="IPR018171">
    <property type="entry name" value="Pept_tRNA_hydro_CS"/>
</dbReference>
<dbReference type="InterPro" id="IPR036416">
    <property type="entry name" value="Pept_tRNA_hydro_sf"/>
</dbReference>
<dbReference type="NCBIfam" id="TIGR00447">
    <property type="entry name" value="pth"/>
    <property type="match status" value="1"/>
</dbReference>
<dbReference type="PANTHER" id="PTHR17224">
    <property type="entry name" value="PEPTIDYL-TRNA HYDROLASE"/>
    <property type="match status" value="1"/>
</dbReference>
<dbReference type="PANTHER" id="PTHR17224:SF1">
    <property type="entry name" value="PEPTIDYL-TRNA HYDROLASE"/>
    <property type="match status" value="1"/>
</dbReference>
<dbReference type="Pfam" id="PF01195">
    <property type="entry name" value="Pept_tRNA_hydro"/>
    <property type="match status" value="1"/>
</dbReference>
<dbReference type="SUPFAM" id="SSF53178">
    <property type="entry name" value="Peptidyl-tRNA hydrolase-like"/>
    <property type="match status" value="1"/>
</dbReference>
<dbReference type="PROSITE" id="PS01195">
    <property type="entry name" value="PEPT_TRNA_HYDROL_1"/>
    <property type="match status" value="1"/>
</dbReference>
<proteinExistence type="inferred from homology"/>
<name>PTH_SHIBS</name>
<protein>
    <recommendedName>
        <fullName evidence="1">Peptidyl-tRNA hydrolase</fullName>
        <shortName evidence="1">Pth</shortName>
        <ecNumber evidence="1">3.1.1.29</ecNumber>
    </recommendedName>
</protein>
<keyword id="KW-0963">Cytoplasm</keyword>
<keyword id="KW-0378">Hydrolase</keyword>
<keyword id="KW-0694">RNA-binding</keyword>
<keyword id="KW-0820">tRNA-binding</keyword>
<sequence length="194" mass="21110">MTIKLIVGLANPGAEYAATRHNAGAWFVDLLAERLRAPLREEAKFFGYTSRVTLGGEDVRLLVPTTFMNLSGKAVAAMASFFRINPDEILVAHDELDLPPGVAKFKLAGAHGGHNGLKDIISKLGNNPNFHRLRIGIGHPGDKNKVVGFVLGKPPVSEQKLIDEAIDEAARCTEMWFTDGLTKATNRLHAFKAQ</sequence>
<reference key="1">
    <citation type="journal article" date="2005" name="Nucleic Acids Res.">
        <title>Genome dynamics and diversity of Shigella species, the etiologic agents of bacillary dysentery.</title>
        <authorList>
            <person name="Yang F."/>
            <person name="Yang J."/>
            <person name="Zhang X."/>
            <person name="Chen L."/>
            <person name="Jiang Y."/>
            <person name="Yan Y."/>
            <person name="Tang X."/>
            <person name="Wang J."/>
            <person name="Xiong Z."/>
            <person name="Dong J."/>
            <person name="Xue Y."/>
            <person name="Zhu Y."/>
            <person name="Xu X."/>
            <person name="Sun L."/>
            <person name="Chen S."/>
            <person name="Nie H."/>
            <person name="Peng J."/>
            <person name="Xu J."/>
            <person name="Wang Y."/>
            <person name="Yuan Z."/>
            <person name="Wen Y."/>
            <person name="Yao Z."/>
            <person name="Shen Y."/>
            <person name="Qiang B."/>
            <person name="Hou Y."/>
            <person name="Yu J."/>
            <person name="Jin Q."/>
        </authorList>
    </citation>
    <scope>NUCLEOTIDE SEQUENCE [LARGE SCALE GENOMIC DNA]</scope>
    <source>
        <strain>Sb227</strain>
    </source>
</reference>
<gene>
    <name evidence="1" type="primary">pth</name>
    <name type="ordered locus">SBO_1863</name>
</gene>
<organism>
    <name type="scientific">Shigella boydii serotype 4 (strain Sb227)</name>
    <dbReference type="NCBI Taxonomy" id="300268"/>
    <lineage>
        <taxon>Bacteria</taxon>
        <taxon>Pseudomonadati</taxon>
        <taxon>Pseudomonadota</taxon>
        <taxon>Gammaproteobacteria</taxon>
        <taxon>Enterobacterales</taxon>
        <taxon>Enterobacteriaceae</taxon>
        <taxon>Shigella</taxon>
    </lineage>
</organism>
<evidence type="ECO:0000255" key="1">
    <source>
        <dbReference type="HAMAP-Rule" id="MF_00083"/>
    </source>
</evidence>
<feature type="chain" id="PRO_0000264106" description="Peptidyl-tRNA hydrolase">
    <location>
        <begin position="1"/>
        <end position="194"/>
    </location>
</feature>
<feature type="active site" description="Proton acceptor" evidence="1">
    <location>
        <position position="21"/>
    </location>
</feature>
<feature type="binding site" evidence="1">
    <location>
        <position position="16"/>
    </location>
    <ligand>
        <name>tRNA</name>
        <dbReference type="ChEBI" id="CHEBI:17843"/>
    </ligand>
</feature>
<feature type="binding site" evidence="1">
    <location>
        <position position="67"/>
    </location>
    <ligand>
        <name>tRNA</name>
        <dbReference type="ChEBI" id="CHEBI:17843"/>
    </ligand>
</feature>
<feature type="binding site" evidence="1">
    <location>
        <position position="69"/>
    </location>
    <ligand>
        <name>tRNA</name>
        <dbReference type="ChEBI" id="CHEBI:17843"/>
    </ligand>
</feature>
<feature type="binding site" evidence="1">
    <location>
        <position position="115"/>
    </location>
    <ligand>
        <name>tRNA</name>
        <dbReference type="ChEBI" id="CHEBI:17843"/>
    </ligand>
</feature>
<feature type="site" description="Discriminates between blocked and unblocked aminoacyl-tRNA" evidence="1">
    <location>
        <position position="11"/>
    </location>
</feature>
<feature type="site" description="Stabilizes the basic form of H active site to accept a proton" evidence="1">
    <location>
        <position position="94"/>
    </location>
</feature>
<comment type="function">
    <text evidence="1">Hydrolyzes ribosome-free peptidyl-tRNAs (with 1 or more amino acids incorporated), which drop off the ribosome during protein synthesis, or as a result of ribosome stalling.</text>
</comment>
<comment type="function">
    <text evidence="1">Catalyzes the release of premature peptidyl moieties from peptidyl-tRNA molecules trapped in stalled 50S ribosomal subunits, and thus maintains levels of free tRNAs and 50S ribosomes.</text>
</comment>
<comment type="catalytic activity">
    <reaction evidence="1">
        <text>an N-acyl-L-alpha-aminoacyl-tRNA + H2O = an N-acyl-L-amino acid + a tRNA + H(+)</text>
        <dbReference type="Rhea" id="RHEA:54448"/>
        <dbReference type="Rhea" id="RHEA-COMP:10123"/>
        <dbReference type="Rhea" id="RHEA-COMP:13883"/>
        <dbReference type="ChEBI" id="CHEBI:15377"/>
        <dbReference type="ChEBI" id="CHEBI:15378"/>
        <dbReference type="ChEBI" id="CHEBI:59874"/>
        <dbReference type="ChEBI" id="CHEBI:78442"/>
        <dbReference type="ChEBI" id="CHEBI:138191"/>
        <dbReference type="EC" id="3.1.1.29"/>
    </reaction>
</comment>
<comment type="subunit">
    <text evidence="1">Monomer.</text>
</comment>
<comment type="subcellular location">
    <subcellularLocation>
        <location evidence="1">Cytoplasm</location>
    </subcellularLocation>
</comment>
<comment type="similarity">
    <text evidence="1">Belongs to the PTH family.</text>
</comment>